<evidence type="ECO:0000269" key="1">
    <source>
    </source>
</evidence>
<evidence type="ECO:0000303" key="2">
    <source>
    </source>
</evidence>
<evidence type="ECO:0000305" key="3"/>
<evidence type="ECO:0000305" key="4">
    <source>
    </source>
</evidence>
<reference evidence="3" key="1">
    <citation type="journal article" date="2016" name="J. Nat. Prod.">
        <title>Purification, Conformational Analysis, and Properties of a Family of Tigerinin Peptides from Skin Secretions of the Crowned Bullfrog Hoplobatrachus occipitalis.</title>
        <authorList>
            <person name="McLaughlin C.M."/>
            <person name="Lampis S."/>
            <person name="Mechkarska M."/>
            <person name="Coquet L."/>
            <person name="Jouenne T."/>
            <person name="King J.D."/>
            <person name="Mangoni M.L."/>
            <person name="Lukic M.L."/>
            <person name="Scorciapino M.A."/>
            <person name="Conlon J.M."/>
        </authorList>
    </citation>
    <scope>PROTEIN SEQUENCE</scope>
    <scope>FUNCTION</scope>
    <scope>SUBCELLULAR LOCATION</scope>
    <scope>MASS SPECTROMETRY</scope>
    <scope>DISULFIDE BOND</scope>
    <source>
        <tissue evidence="2">Skin secretion</tissue>
    </source>
</reference>
<proteinExistence type="evidence at protein level"/>
<keyword id="KW-0878">Amphibian defense peptide</keyword>
<keyword id="KW-0903">Direct protein sequencing</keyword>
<keyword id="KW-1015">Disulfide bond</keyword>
<keyword id="KW-0964">Secreted</keyword>
<sequence length="12" mass="1331">RICTAIPLPMCL</sequence>
<protein>
    <recommendedName>
        <fullName evidence="2">Tigerinin-3O</fullName>
    </recommendedName>
</protein>
<name>TIN3O_HOPOC</name>
<comment type="function">
    <text evidence="1">Stimulates insulin release from beta cells at a concentration of 100 nM and release of glucagon-like peptide 1 (GLP-1) from enteroendocrine cells at a concentration of 1 uM in vitro. Reduces secretion of interferon gamma from peritoneal cells in a mouse model. Has no inhibitory activity against Gram-positive bacterium B.megaterium Bm11 or Gram-negative bacterium E.coli ATCC 25922 at concentrations of up to 100uM. Has no hemolytic activity against mouse erythrocytes.</text>
</comment>
<comment type="subcellular location">
    <subcellularLocation>
        <location evidence="1">Secreted</location>
    </subcellularLocation>
</comment>
<comment type="tissue specificity">
    <text evidence="4">Expressed by the skin glands.</text>
</comment>
<comment type="mass spectrometry" mass="1328.7" method="MALDI" evidence="1"/>
<accession>C0HL43</accession>
<feature type="peptide" id="PRO_0000442177" description="Tigerinin-3O" evidence="1">
    <location>
        <begin position="1"/>
        <end position="12"/>
    </location>
</feature>
<feature type="disulfide bond" evidence="1">
    <location>
        <begin position="3"/>
        <end position="11"/>
    </location>
</feature>
<organism evidence="2">
    <name type="scientific">Hoplobatrachus occipitalis</name>
    <name type="common">African groove-crowned bullfrog</name>
    <name type="synonym">Rana occipitalis</name>
    <dbReference type="NCBI Taxonomy" id="127645"/>
    <lineage>
        <taxon>Eukaryota</taxon>
        <taxon>Metazoa</taxon>
        <taxon>Chordata</taxon>
        <taxon>Craniata</taxon>
        <taxon>Vertebrata</taxon>
        <taxon>Euteleostomi</taxon>
        <taxon>Amphibia</taxon>
        <taxon>Batrachia</taxon>
        <taxon>Anura</taxon>
        <taxon>Neobatrachia</taxon>
        <taxon>Ranoidea</taxon>
        <taxon>Dicroglossidae</taxon>
        <taxon>Dicroglossinae</taxon>
        <taxon>Hoplobatrachus</taxon>
    </lineage>
</organism>
<dbReference type="GO" id="GO:0005576">
    <property type="term" value="C:extracellular region"/>
    <property type="evidence" value="ECO:0007669"/>
    <property type="project" value="UniProtKB-SubCell"/>
</dbReference>
<dbReference type="GO" id="GO:0006952">
    <property type="term" value="P:defense response"/>
    <property type="evidence" value="ECO:0007669"/>
    <property type="project" value="UniProtKB-KW"/>
</dbReference>